<reference key="1">
    <citation type="submission" date="2006-12" db="EMBL/GenBank/DDBJ databases">
        <title>Complete sequence of Pyrobaculum islandicum DSM 4184.</title>
        <authorList>
            <person name="Copeland A."/>
            <person name="Lucas S."/>
            <person name="Lapidus A."/>
            <person name="Barry K."/>
            <person name="Detter J.C."/>
            <person name="Glavina del Rio T."/>
            <person name="Dalin E."/>
            <person name="Tice H."/>
            <person name="Pitluck S."/>
            <person name="Meincke L."/>
            <person name="Brettin T."/>
            <person name="Bruce D."/>
            <person name="Han C."/>
            <person name="Tapia R."/>
            <person name="Gilna P."/>
            <person name="Schmutz J."/>
            <person name="Larimer F."/>
            <person name="Land M."/>
            <person name="Hauser L."/>
            <person name="Kyrpides N."/>
            <person name="Mikhailova N."/>
            <person name="Cozen A.E."/>
            <person name="Fitz-Gibbon S.T."/>
            <person name="House C.H."/>
            <person name="Saltikov C."/>
            <person name="Lowe T."/>
            <person name="Richardson P."/>
        </authorList>
    </citation>
    <scope>NUCLEOTIDE SEQUENCE [LARGE SCALE GENOMIC DNA]</scope>
    <source>
        <strain>DSM 4184 / JCM 9189 / GEO3</strain>
    </source>
</reference>
<reference key="2">
    <citation type="journal article" date="2007" name="Extremophiles">
        <title>Characterization of malate dehydrogenase from the hyperthermophilic archaeon Pyrobaculum islandicum.</title>
        <authorList>
            <person name="Yennaco L.J."/>
            <person name="Hu Y."/>
            <person name="Holden J.F."/>
        </authorList>
    </citation>
    <scope>FUNCTION</scope>
    <scope>CATALYTIC ACTIVITY</scope>
    <scope>BIOPHYSICOCHEMICAL PROPERTIES</scope>
    <scope>SUBUNIT</scope>
    <source>
        <strain>DSM 4184 / JCM 9189 / GEO3</strain>
    </source>
</reference>
<accession>A1RS58</accession>
<feature type="chain" id="PRO_0000436036" description="Malate dehydrogenase">
    <location>
        <begin position="1"/>
        <end position="309"/>
    </location>
</feature>
<feature type="active site" description="Proton acceptor" evidence="2">
    <location>
        <position position="173"/>
    </location>
</feature>
<feature type="binding site" evidence="1">
    <location>
        <begin position="6"/>
        <end position="11"/>
    </location>
    <ligand>
        <name>NAD(+)</name>
        <dbReference type="ChEBI" id="CHEBI:57540"/>
    </ligand>
</feature>
<feature type="binding site" evidence="1">
    <location>
        <position position="31"/>
    </location>
    <ligand>
        <name>NAD(+)</name>
        <dbReference type="ChEBI" id="CHEBI:57540"/>
    </ligand>
</feature>
<feature type="binding site" evidence="2">
    <location>
        <position position="80"/>
    </location>
    <ligand>
        <name>substrate</name>
    </ligand>
</feature>
<feature type="binding site" evidence="2">
    <location>
        <position position="86"/>
    </location>
    <ligand>
        <name>substrate</name>
    </ligand>
</feature>
<feature type="binding site" evidence="1">
    <location>
        <position position="93"/>
    </location>
    <ligand>
        <name>NAD(+)</name>
        <dbReference type="ChEBI" id="CHEBI:57540"/>
    </ligand>
</feature>
<feature type="binding site" evidence="1">
    <location>
        <begin position="116"/>
        <end position="118"/>
    </location>
    <ligand>
        <name>NAD(+)</name>
        <dbReference type="ChEBI" id="CHEBI:57540"/>
    </ligand>
</feature>
<feature type="binding site" evidence="2">
    <location>
        <position position="118"/>
    </location>
    <ligand>
        <name>substrate</name>
    </ligand>
</feature>
<feature type="binding site" evidence="2">
    <location>
        <position position="149"/>
    </location>
    <ligand>
        <name>substrate</name>
    </ligand>
</feature>
<sequence>MITIIGSGRVGTAAAVIMGLLKIDTKILLIDIIKGLPQGEALDMNHMSSILGLDVEYFGSNEYKDMEGSDLVIVTAGLPRKPGMTREQLLEANAKIVSEIGKEIKRYAPNSVVILTTNPLDAMTYVMWKSTGFPRERVIGFSGVLDAGRLAYYAAKKLGVSPASILPIVLGQHGESMFPVPSKSFIHGVPLSRLLTEEQLKEVVEETVKAGARITELRGFSSNWGPGAGLALMAEAVKRDTKRSLIASVVLQGEYDVRDVPVEVPVILGRSGVLKVLEIELSAEERQKFMQSVEAIRKLIASIPSNYLQ</sequence>
<name>MDH_PYRIL</name>
<comment type="function">
    <text evidence="3">Catalyzes the reversible oxidation of malate to oxaloacetate. Exhibits higher specific activity for oxaloacetate reduction than for malate oxidation in vitro. Has a strong preference for NAD. Can use NADPH for oxaloacetate reduction, but activity decreases more than 90%. No activity detected with NADP(+) and malate.</text>
</comment>
<comment type="catalytic activity">
    <reaction evidence="3">
        <text>(S)-malate + NAD(+) = oxaloacetate + NADH + H(+)</text>
        <dbReference type="Rhea" id="RHEA:21432"/>
        <dbReference type="ChEBI" id="CHEBI:15378"/>
        <dbReference type="ChEBI" id="CHEBI:15589"/>
        <dbReference type="ChEBI" id="CHEBI:16452"/>
        <dbReference type="ChEBI" id="CHEBI:57540"/>
        <dbReference type="ChEBI" id="CHEBI:57945"/>
        <dbReference type="EC" id="1.1.1.37"/>
    </reaction>
</comment>
<comment type="biophysicochemical properties">
    <kinetics>
        <KM evidence="3">0.015 mM for oxaloacetate</KM>
        <KM evidence="3">0.086 mM for NADH</KM>
        <KM evidence="3">0.5 mM for malate</KM>
        <KM evidence="3">0.028 mM for NAD(+)</KM>
    </kinetics>
    <phDependence>
        <text evidence="3">Optimum pH is 10.0.</text>
    </phDependence>
    <temperatureDependence>
        <text evidence="3">Optimum temperature is above 92 degrees Celsius.</text>
    </temperatureDependence>
</comment>
<comment type="subunit">
    <text evidence="3">Homotetramer.</text>
</comment>
<comment type="similarity">
    <text evidence="5">Belongs to the LDH/MDH superfamily.</text>
</comment>
<dbReference type="EC" id="1.1.1.37" evidence="3"/>
<dbReference type="EMBL" id="CP000504">
    <property type="protein sequence ID" value="ABL87790.1"/>
    <property type="molecule type" value="Genomic_DNA"/>
</dbReference>
<dbReference type="RefSeq" id="WP_011762366.1">
    <property type="nucleotide sequence ID" value="NC_008701.1"/>
</dbReference>
<dbReference type="SMR" id="A1RS58"/>
<dbReference type="STRING" id="384616.Pisl_0612"/>
<dbReference type="GeneID" id="4617605"/>
<dbReference type="KEGG" id="pis:Pisl_0612"/>
<dbReference type="eggNOG" id="arCOG00246">
    <property type="taxonomic scope" value="Archaea"/>
</dbReference>
<dbReference type="HOGENOM" id="CLU_045401_2_1_2"/>
<dbReference type="OrthoDB" id="2596at2157"/>
<dbReference type="Proteomes" id="UP000002595">
    <property type="component" value="Chromosome"/>
</dbReference>
<dbReference type="GO" id="GO:0004459">
    <property type="term" value="F:L-lactate dehydrogenase activity"/>
    <property type="evidence" value="ECO:0007669"/>
    <property type="project" value="TreeGrafter"/>
</dbReference>
<dbReference type="GO" id="GO:0030060">
    <property type="term" value="F:L-malate dehydrogenase (NAD+) activity"/>
    <property type="evidence" value="ECO:0007669"/>
    <property type="project" value="UniProtKB-EC"/>
</dbReference>
<dbReference type="GO" id="GO:0006089">
    <property type="term" value="P:lactate metabolic process"/>
    <property type="evidence" value="ECO:0007669"/>
    <property type="project" value="TreeGrafter"/>
</dbReference>
<dbReference type="GO" id="GO:0006099">
    <property type="term" value="P:tricarboxylic acid cycle"/>
    <property type="evidence" value="ECO:0007669"/>
    <property type="project" value="UniProtKB-KW"/>
</dbReference>
<dbReference type="CDD" id="cd01339">
    <property type="entry name" value="LDH-like_MDH"/>
    <property type="match status" value="1"/>
</dbReference>
<dbReference type="FunFam" id="3.40.50.720:FF:000018">
    <property type="entry name" value="Malate dehydrogenase"/>
    <property type="match status" value="1"/>
</dbReference>
<dbReference type="Gene3D" id="3.90.110.10">
    <property type="entry name" value="Lactate dehydrogenase/glycoside hydrolase, family 4, C-terminal"/>
    <property type="match status" value="1"/>
</dbReference>
<dbReference type="Gene3D" id="3.40.50.720">
    <property type="entry name" value="NAD(P)-binding Rossmann-like Domain"/>
    <property type="match status" value="1"/>
</dbReference>
<dbReference type="InterPro" id="IPR001557">
    <property type="entry name" value="L-lactate/malate_DH"/>
</dbReference>
<dbReference type="InterPro" id="IPR022383">
    <property type="entry name" value="Lactate/malate_DH_C"/>
</dbReference>
<dbReference type="InterPro" id="IPR001236">
    <property type="entry name" value="Lactate/malate_DH_N"/>
</dbReference>
<dbReference type="InterPro" id="IPR015955">
    <property type="entry name" value="Lactate_DH/Glyco_Ohase_4_C"/>
</dbReference>
<dbReference type="InterPro" id="IPR011275">
    <property type="entry name" value="Malate_DH_type3"/>
</dbReference>
<dbReference type="InterPro" id="IPR036291">
    <property type="entry name" value="NAD(P)-bd_dom_sf"/>
</dbReference>
<dbReference type="NCBIfam" id="NF004863">
    <property type="entry name" value="PRK06223.1"/>
    <property type="match status" value="1"/>
</dbReference>
<dbReference type="PANTHER" id="PTHR43128">
    <property type="entry name" value="L-2-HYDROXYCARBOXYLATE DEHYDROGENASE (NAD(P)(+))"/>
    <property type="match status" value="1"/>
</dbReference>
<dbReference type="PANTHER" id="PTHR43128:SF16">
    <property type="entry name" value="L-LACTATE DEHYDROGENASE"/>
    <property type="match status" value="1"/>
</dbReference>
<dbReference type="Pfam" id="PF02866">
    <property type="entry name" value="Ldh_1_C"/>
    <property type="match status" value="1"/>
</dbReference>
<dbReference type="Pfam" id="PF00056">
    <property type="entry name" value="Ldh_1_N"/>
    <property type="match status" value="1"/>
</dbReference>
<dbReference type="PIRSF" id="PIRSF000102">
    <property type="entry name" value="Lac_mal_DH"/>
    <property type="match status" value="1"/>
</dbReference>
<dbReference type="PRINTS" id="PR00086">
    <property type="entry name" value="LLDHDRGNASE"/>
</dbReference>
<dbReference type="SUPFAM" id="SSF56327">
    <property type="entry name" value="LDH C-terminal domain-like"/>
    <property type="match status" value="1"/>
</dbReference>
<dbReference type="SUPFAM" id="SSF51735">
    <property type="entry name" value="NAD(P)-binding Rossmann-fold domains"/>
    <property type="match status" value="1"/>
</dbReference>
<organism>
    <name type="scientific">Pyrobaculum islandicum (strain DSM 4184 / JCM 9189 / GEO3)</name>
    <dbReference type="NCBI Taxonomy" id="384616"/>
    <lineage>
        <taxon>Archaea</taxon>
        <taxon>Thermoproteota</taxon>
        <taxon>Thermoprotei</taxon>
        <taxon>Thermoproteales</taxon>
        <taxon>Thermoproteaceae</taxon>
        <taxon>Pyrobaculum</taxon>
    </lineage>
</organism>
<gene>
    <name evidence="4" type="primary">mdh</name>
    <name evidence="6" type="ordered locus">Pisl_0612</name>
</gene>
<proteinExistence type="evidence at protein level"/>
<evidence type="ECO:0000250" key="1">
    <source>
        <dbReference type="UniProtKB" id="O08349"/>
    </source>
</evidence>
<evidence type="ECO:0000250" key="2">
    <source>
        <dbReference type="UniProtKB" id="P61889"/>
    </source>
</evidence>
<evidence type="ECO:0000269" key="3">
    <source>
    </source>
</evidence>
<evidence type="ECO:0000303" key="4">
    <source>
    </source>
</evidence>
<evidence type="ECO:0000305" key="5"/>
<evidence type="ECO:0000312" key="6">
    <source>
        <dbReference type="EMBL" id="ABL87790.1"/>
    </source>
</evidence>
<protein>
    <recommendedName>
        <fullName evidence="4">Malate dehydrogenase</fullName>
        <ecNumber evidence="3">1.1.1.37</ecNumber>
    </recommendedName>
</protein>
<keyword id="KW-0520">NAD</keyword>
<keyword id="KW-0560">Oxidoreductase</keyword>
<keyword id="KW-0816">Tricarboxylic acid cycle</keyword>